<name>CHLL_TRIEI</name>
<evidence type="ECO:0000255" key="1">
    <source>
        <dbReference type="HAMAP-Rule" id="MF_00355"/>
    </source>
</evidence>
<organism>
    <name type="scientific">Trichodesmium erythraeum (strain IMS101)</name>
    <dbReference type="NCBI Taxonomy" id="203124"/>
    <lineage>
        <taxon>Bacteria</taxon>
        <taxon>Bacillati</taxon>
        <taxon>Cyanobacteriota</taxon>
        <taxon>Cyanophyceae</taxon>
        <taxon>Oscillatoriophycideae</taxon>
        <taxon>Oscillatoriales</taxon>
        <taxon>Microcoleaceae</taxon>
        <taxon>Trichodesmium</taxon>
    </lineage>
</organism>
<gene>
    <name evidence="1" type="primary">chlL</name>
    <name type="ordered locus">Tery_1532</name>
</gene>
<keyword id="KW-0004">4Fe-4S</keyword>
<keyword id="KW-0067">ATP-binding</keyword>
<keyword id="KW-0149">Chlorophyll biosynthesis</keyword>
<keyword id="KW-0408">Iron</keyword>
<keyword id="KW-0411">Iron-sulfur</keyword>
<keyword id="KW-0460">Magnesium</keyword>
<keyword id="KW-0479">Metal-binding</keyword>
<keyword id="KW-0547">Nucleotide-binding</keyword>
<keyword id="KW-0560">Oxidoreductase</keyword>
<keyword id="KW-0602">Photosynthesis</keyword>
<protein>
    <recommendedName>
        <fullName evidence="1">Light-independent protochlorophyllide reductase iron-sulfur ATP-binding protein</fullName>
        <shortName evidence="1">DPOR subunit L</shortName>
        <shortName evidence="1">LI-POR subunit L</shortName>
        <ecNumber evidence="1">1.3.7.7</ecNumber>
    </recommendedName>
</protein>
<feature type="chain" id="PRO_1000048470" description="Light-independent protochlorophyllide reductase iron-sulfur ATP-binding protein">
    <location>
        <begin position="1"/>
        <end position="288"/>
    </location>
</feature>
<feature type="binding site" evidence="1">
    <location>
        <begin position="10"/>
        <end position="15"/>
    </location>
    <ligand>
        <name>ATP</name>
        <dbReference type="ChEBI" id="CHEBI:30616"/>
    </ligand>
</feature>
<feature type="binding site" evidence="1">
    <location>
        <position position="14"/>
    </location>
    <ligand>
        <name>Mg(2+)</name>
        <dbReference type="ChEBI" id="CHEBI:18420"/>
    </ligand>
</feature>
<feature type="binding site" evidence="1">
    <location>
        <position position="39"/>
    </location>
    <ligand>
        <name>ATP</name>
        <dbReference type="ChEBI" id="CHEBI:30616"/>
    </ligand>
</feature>
<feature type="binding site" evidence="1">
    <location>
        <position position="95"/>
    </location>
    <ligand>
        <name>[4Fe-4S] cluster</name>
        <dbReference type="ChEBI" id="CHEBI:49883"/>
        <note>ligand shared between dimeric partners</note>
    </ligand>
</feature>
<feature type="binding site" evidence="1">
    <location>
        <position position="129"/>
    </location>
    <ligand>
        <name>[4Fe-4S] cluster</name>
        <dbReference type="ChEBI" id="CHEBI:49883"/>
        <note>ligand shared between dimeric partners</note>
    </ligand>
</feature>
<feature type="binding site" evidence="1">
    <location>
        <begin position="180"/>
        <end position="181"/>
    </location>
    <ligand>
        <name>ATP</name>
        <dbReference type="ChEBI" id="CHEBI:30616"/>
    </ligand>
</feature>
<reference key="1">
    <citation type="journal article" date="2015" name="Proc. Natl. Acad. Sci. U.S.A.">
        <title>Trichodesmium genome maintains abundant, widespread noncoding DNA in situ, despite oligotrophic lifestyle.</title>
        <authorList>
            <person name="Walworth N."/>
            <person name="Pfreundt U."/>
            <person name="Nelson W.C."/>
            <person name="Mincer T."/>
            <person name="Heidelberg J.F."/>
            <person name="Fu F."/>
            <person name="Waterbury J.B."/>
            <person name="Glavina del Rio T."/>
            <person name="Goodwin L."/>
            <person name="Kyrpides N.C."/>
            <person name="Land M.L."/>
            <person name="Woyke T."/>
            <person name="Hutchins D.A."/>
            <person name="Hess W.R."/>
            <person name="Webb E.A."/>
        </authorList>
    </citation>
    <scope>NUCLEOTIDE SEQUENCE [LARGE SCALE GENOMIC DNA]</scope>
    <source>
        <strain>IMS101</strain>
    </source>
</reference>
<sequence length="288" mass="31540">MKLSVYGKGGIGKSTTSCNISVALAKRGKKVLQIGCDPKHDSTFTLTGFLIPTIIDTLQEKDYHYEDIWPEDVIYKGYGGVDCVEAGGPPAGAGCGGYVVGETVKLLKELNAFDEYDVILFDVLGDVVCGGFAAPLNYSDYCMIVTDNGFDALFAANRIAASVREKARTHTLRLAGLIGNRTSKRDLINKYVEAVPMPVLEVLPLIEDIRVSRVKGKTLFEMAETDPSLQYVCNYYLNIADQILALPEGVVPSESPDRDLFALLSDFYLNPSKSHVMSEDEELDLMMV</sequence>
<accession>Q115L1</accession>
<proteinExistence type="inferred from homology"/>
<comment type="function">
    <text evidence="1">Component of the dark-operative protochlorophyllide reductase (DPOR) that uses Mg-ATP and reduced ferredoxin to reduce ring D of protochlorophyllide (Pchlide) to form chlorophyllide a (Chlide). This reaction is light-independent. The L component serves as a unique electron donor to the NB-component of the complex, and binds Mg-ATP.</text>
</comment>
<comment type="catalytic activity">
    <reaction evidence="1">
        <text>chlorophyllide a + oxidized 2[4Fe-4S]-[ferredoxin] + 2 ADP + 2 phosphate = protochlorophyllide a + reduced 2[4Fe-4S]-[ferredoxin] + 2 ATP + 2 H2O</text>
        <dbReference type="Rhea" id="RHEA:28202"/>
        <dbReference type="Rhea" id="RHEA-COMP:10002"/>
        <dbReference type="Rhea" id="RHEA-COMP:10004"/>
        <dbReference type="ChEBI" id="CHEBI:15377"/>
        <dbReference type="ChEBI" id="CHEBI:30616"/>
        <dbReference type="ChEBI" id="CHEBI:33722"/>
        <dbReference type="ChEBI" id="CHEBI:33723"/>
        <dbReference type="ChEBI" id="CHEBI:43474"/>
        <dbReference type="ChEBI" id="CHEBI:83348"/>
        <dbReference type="ChEBI" id="CHEBI:83350"/>
        <dbReference type="ChEBI" id="CHEBI:456216"/>
        <dbReference type="EC" id="1.3.7.7"/>
    </reaction>
</comment>
<comment type="cofactor">
    <cofactor evidence="1">
        <name>[4Fe-4S] cluster</name>
        <dbReference type="ChEBI" id="CHEBI:49883"/>
    </cofactor>
    <text evidence="1">Binds 1 [4Fe-4S] cluster per dimer.</text>
</comment>
<comment type="pathway">
    <text evidence="1">Porphyrin-containing compound metabolism; chlorophyll biosynthesis (light-independent).</text>
</comment>
<comment type="subunit">
    <text evidence="1">Homodimer. Protochlorophyllide reductase is composed of three subunits; ChlL, ChlN and ChlB.</text>
</comment>
<comment type="similarity">
    <text evidence="1">Belongs to the NifH/BchL/ChlL family.</text>
</comment>
<dbReference type="EC" id="1.3.7.7" evidence="1"/>
<dbReference type="EMBL" id="CP000393">
    <property type="protein sequence ID" value="ABG50813.1"/>
    <property type="molecule type" value="Genomic_DNA"/>
</dbReference>
<dbReference type="RefSeq" id="WP_011611189.1">
    <property type="nucleotide sequence ID" value="NC_008312.1"/>
</dbReference>
<dbReference type="SMR" id="Q115L1"/>
<dbReference type="STRING" id="203124.Tery_1532"/>
<dbReference type="KEGG" id="ter:Tery_1532"/>
<dbReference type="eggNOG" id="COG1348">
    <property type="taxonomic scope" value="Bacteria"/>
</dbReference>
<dbReference type="HOGENOM" id="CLU_059373_2_0_3"/>
<dbReference type="OrthoDB" id="9778641at2"/>
<dbReference type="UniPathway" id="UPA00670"/>
<dbReference type="GO" id="GO:0051539">
    <property type="term" value="F:4 iron, 4 sulfur cluster binding"/>
    <property type="evidence" value="ECO:0007669"/>
    <property type="project" value="UniProtKB-UniRule"/>
</dbReference>
<dbReference type="GO" id="GO:0005524">
    <property type="term" value="F:ATP binding"/>
    <property type="evidence" value="ECO:0007669"/>
    <property type="project" value="UniProtKB-UniRule"/>
</dbReference>
<dbReference type="GO" id="GO:0046872">
    <property type="term" value="F:metal ion binding"/>
    <property type="evidence" value="ECO:0007669"/>
    <property type="project" value="UniProtKB-KW"/>
</dbReference>
<dbReference type="GO" id="GO:0016730">
    <property type="term" value="F:oxidoreductase activity, acting on iron-sulfur proteins as donors"/>
    <property type="evidence" value="ECO:0007669"/>
    <property type="project" value="InterPro"/>
</dbReference>
<dbReference type="GO" id="GO:0016636">
    <property type="term" value="F:oxidoreductase activity, acting on the CH-CH group of donors, iron-sulfur protein as acceptor"/>
    <property type="evidence" value="ECO:0007669"/>
    <property type="project" value="UniProtKB-UniRule"/>
</dbReference>
<dbReference type="GO" id="GO:0036068">
    <property type="term" value="P:light-independent chlorophyll biosynthetic process"/>
    <property type="evidence" value="ECO:0007669"/>
    <property type="project" value="UniProtKB-UniRule"/>
</dbReference>
<dbReference type="GO" id="GO:0019685">
    <property type="term" value="P:photosynthesis, dark reaction"/>
    <property type="evidence" value="ECO:0007669"/>
    <property type="project" value="InterPro"/>
</dbReference>
<dbReference type="CDD" id="cd02032">
    <property type="entry name" value="Bchl-like"/>
    <property type="match status" value="1"/>
</dbReference>
<dbReference type="Gene3D" id="3.40.50.300">
    <property type="entry name" value="P-loop containing nucleotide triphosphate hydrolases"/>
    <property type="match status" value="1"/>
</dbReference>
<dbReference type="HAMAP" id="MF_00355">
    <property type="entry name" value="ChlL_BchL"/>
    <property type="match status" value="1"/>
</dbReference>
<dbReference type="InterPro" id="IPR030655">
    <property type="entry name" value="NifH/chlL_CS"/>
</dbReference>
<dbReference type="InterPro" id="IPR000392">
    <property type="entry name" value="NifH/frxC"/>
</dbReference>
<dbReference type="InterPro" id="IPR027417">
    <property type="entry name" value="P-loop_NTPase"/>
</dbReference>
<dbReference type="InterPro" id="IPR005971">
    <property type="entry name" value="Protochlorophyllide_ATP-bd"/>
</dbReference>
<dbReference type="NCBIfam" id="TIGR01281">
    <property type="entry name" value="DPOR_bchL"/>
    <property type="match status" value="1"/>
</dbReference>
<dbReference type="PANTHER" id="PTHR42864">
    <property type="entry name" value="LIGHT-INDEPENDENT PROTOCHLOROPHYLLIDE REDUCTASE IRON-SULFUR ATP-BINDING PROTEIN"/>
    <property type="match status" value="1"/>
</dbReference>
<dbReference type="PANTHER" id="PTHR42864:SF2">
    <property type="entry name" value="LIGHT-INDEPENDENT PROTOCHLOROPHYLLIDE REDUCTASE IRON-SULFUR ATP-BINDING PROTEIN"/>
    <property type="match status" value="1"/>
</dbReference>
<dbReference type="Pfam" id="PF00142">
    <property type="entry name" value="Fer4_NifH"/>
    <property type="match status" value="1"/>
</dbReference>
<dbReference type="PIRSF" id="PIRSF000363">
    <property type="entry name" value="Nitrogenase_iron"/>
    <property type="match status" value="1"/>
</dbReference>
<dbReference type="PRINTS" id="PR00091">
    <property type="entry name" value="NITROGNASEII"/>
</dbReference>
<dbReference type="SUPFAM" id="SSF52540">
    <property type="entry name" value="P-loop containing nucleoside triphosphate hydrolases"/>
    <property type="match status" value="1"/>
</dbReference>
<dbReference type="PROSITE" id="PS00746">
    <property type="entry name" value="NIFH_FRXC_1"/>
    <property type="match status" value="1"/>
</dbReference>
<dbReference type="PROSITE" id="PS00692">
    <property type="entry name" value="NIFH_FRXC_2"/>
    <property type="match status" value="1"/>
</dbReference>
<dbReference type="PROSITE" id="PS51026">
    <property type="entry name" value="NIFH_FRXC_3"/>
    <property type="match status" value="1"/>
</dbReference>